<sequence>MIELDINASDKSLSHRAVIFSLLAKKPCFVRNFLMGGDCLSSLEIAQNLGARVENIAKNSFKITPPWALKEPRKILNCNNSGTSMRLYSGLLSAQKGLFVLSGDNSLNSRPMKRIIEPLKAFGTKILGREDNHFAPLVILGSPLKACDYESPIASAQVKSAFILSALQAQGTSTYRESELSRNHTEIMLKSLGANIKDQDGVLKISPLEKPLEAFDFKIANDPSSAFFFALACAILPKSRLLLKNVLLNPTRIEAFEVLKKMGTHIECVIKSKDLEIIGDIYIEHALLKAITIDQNIASLIDEIPALGIAMLFAKGKSVVKNAKDLRSKESDRIKALISNLKALGIECEEFEDGFYIEGLEDISQLKQRFSQIKPPIIKSFNDHRIAMSFAILTLMLPLEIDNLECANISFPQFKRLLNLFKKGSLHGN</sequence>
<name>AROA_HELAH</name>
<keyword id="KW-0028">Amino-acid biosynthesis</keyword>
<keyword id="KW-0057">Aromatic amino acid biosynthesis</keyword>
<keyword id="KW-0963">Cytoplasm</keyword>
<keyword id="KW-0808">Transferase</keyword>
<protein>
    <recommendedName>
        <fullName evidence="1">3-phosphoshikimate 1-carboxyvinyltransferase</fullName>
        <ecNumber evidence="1">2.5.1.19</ecNumber>
    </recommendedName>
    <alternativeName>
        <fullName evidence="1">5-enolpyruvylshikimate-3-phosphate synthase</fullName>
        <shortName evidence="1">EPSP synthase</shortName>
        <shortName evidence="1">EPSPS</shortName>
    </alternativeName>
</protein>
<reference key="1">
    <citation type="journal article" date="2006" name="PLoS Genet.">
        <title>Who ate whom? Adaptive Helicobacter genomic changes that accompanied a host jump from early humans to large felines.</title>
        <authorList>
            <person name="Eppinger M."/>
            <person name="Baar C."/>
            <person name="Linz B."/>
            <person name="Raddatz G."/>
            <person name="Lanz C."/>
            <person name="Keller H."/>
            <person name="Morelli G."/>
            <person name="Gressmann H."/>
            <person name="Achtman M."/>
            <person name="Schuster S.C."/>
        </authorList>
    </citation>
    <scope>NUCLEOTIDE SEQUENCE [LARGE SCALE GENOMIC DNA]</scope>
    <source>
        <strain>Sheeba</strain>
    </source>
</reference>
<dbReference type="EC" id="2.5.1.19" evidence="1"/>
<dbReference type="EMBL" id="AM260522">
    <property type="protein sequence ID" value="CAJ99290.1"/>
    <property type="molecule type" value="Genomic_DNA"/>
</dbReference>
<dbReference type="RefSeq" id="WP_011577404.1">
    <property type="nucleotide sequence ID" value="NC_008229.1"/>
</dbReference>
<dbReference type="SMR" id="Q17YI6"/>
<dbReference type="STRING" id="382638.Hac_0459"/>
<dbReference type="GeneID" id="31757964"/>
<dbReference type="KEGG" id="hac:Hac_0459"/>
<dbReference type="eggNOG" id="COG0128">
    <property type="taxonomic scope" value="Bacteria"/>
</dbReference>
<dbReference type="HOGENOM" id="CLU_024321_0_1_7"/>
<dbReference type="OrthoDB" id="9809920at2"/>
<dbReference type="BioCyc" id="HACI382638:HAC_RS02100-MONOMER"/>
<dbReference type="UniPathway" id="UPA00053">
    <property type="reaction ID" value="UER00089"/>
</dbReference>
<dbReference type="Proteomes" id="UP000000775">
    <property type="component" value="Chromosome"/>
</dbReference>
<dbReference type="GO" id="GO:0005737">
    <property type="term" value="C:cytoplasm"/>
    <property type="evidence" value="ECO:0007669"/>
    <property type="project" value="UniProtKB-SubCell"/>
</dbReference>
<dbReference type="GO" id="GO:0003866">
    <property type="term" value="F:3-phosphoshikimate 1-carboxyvinyltransferase activity"/>
    <property type="evidence" value="ECO:0007669"/>
    <property type="project" value="UniProtKB-UniRule"/>
</dbReference>
<dbReference type="GO" id="GO:0008652">
    <property type="term" value="P:amino acid biosynthetic process"/>
    <property type="evidence" value="ECO:0007669"/>
    <property type="project" value="UniProtKB-KW"/>
</dbReference>
<dbReference type="GO" id="GO:0009073">
    <property type="term" value="P:aromatic amino acid family biosynthetic process"/>
    <property type="evidence" value="ECO:0007669"/>
    <property type="project" value="UniProtKB-KW"/>
</dbReference>
<dbReference type="GO" id="GO:0009423">
    <property type="term" value="P:chorismate biosynthetic process"/>
    <property type="evidence" value="ECO:0007669"/>
    <property type="project" value="UniProtKB-UniRule"/>
</dbReference>
<dbReference type="CDD" id="cd01556">
    <property type="entry name" value="EPSP_synthase"/>
    <property type="match status" value="1"/>
</dbReference>
<dbReference type="FunFam" id="3.65.10.10:FF:000005">
    <property type="entry name" value="3-phosphoshikimate 1-carboxyvinyltransferase"/>
    <property type="match status" value="1"/>
</dbReference>
<dbReference type="Gene3D" id="3.65.10.10">
    <property type="entry name" value="Enolpyruvate transferase domain"/>
    <property type="match status" value="2"/>
</dbReference>
<dbReference type="HAMAP" id="MF_00210">
    <property type="entry name" value="EPSP_synth"/>
    <property type="match status" value="1"/>
</dbReference>
<dbReference type="InterPro" id="IPR001986">
    <property type="entry name" value="Enolpyruvate_Tfrase_dom"/>
</dbReference>
<dbReference type="InterPro" id="IPR036968">
    <property type="entry name" value="Enolpyruvate_Tfrase_sf"/>
</dbReference>
<dbReference type="InterPro" id="IPR006264">
    <property type="entry name" value="EPSP_synthase"/>
</dbReference>
<dbReference type="InterPro" id="IPR023193">
    <property type="entry name" value="EPSP_synthase_CS"/>
</dbReference>
<dbReference type="InterPro" id="IPR013792">
    <property type="entry name" value="RNA3'P_cycl/enolpyr_Trfase_a/b"/>
</dbReference>
<dbReference type="NCBIfam" id="TIGR01356">
    <property type="entry name" value="aroA"/>
    <property type="match status" value="1"/>
</dbReference>
<dbReference type="PANTHER" id="PTHR21090">
    <property type="entry name" value="AROM/DEHYDROQUINATE SYNTHASE"/>
    <property type="match status" value="1"/>
</dbReference>
<dbReference type="PANTHER" id="PTHR21090:SF5">
    <property type="entry name" value="PENTAFUNCTIONAL AROM POLYPEPTIDE"/>
    <property type="match status" value="1"/>
</dbReference>
<dbReference type="Pfam" id="PF00275">
    <property type="entry name" value="EPSP_synthase"/>
    <property type="match status" value="1"/>
</dbReference>
<dbReference type="PIRSF" id="PIRSF000505">
    <property type="entry name" value="EPSPS"/>
    <property type="match status" value="1"/>
</dbReference>
<dbReference type="SUPFAM" id="SSF55205">
    <property type="entry name" value="EPT/RTPC-like"/>
    <property type="match status" value="1"/>
</dbReference>
<dbReference type="PROSITE" id="PS00104">
    <property type="entry name" value="EPSP_SYNTHASE_1"/>
    <property type="match status" value="1"/>
</dbReference>
<dbReference type="PROSITE" id="PS00885">
    <property type="entry name" value="EPSP_SYNTHASE_2"/>
    <property type="match status" value="1"/>
</dbReference>
<evidence type="ECO:0000255" key="1">
    <source>
        <dbReference type="HAMAP-Rule" id="MF_00210"/>
    </source>
</evidence>
<proteinExistence type="inferred from homology"/>
<organism>
    <name type="scientific">Helicobacter acinonychis (strain Sheeba)</name>
    <dbReference type="NCBI Taxonomy" id="382638"/>
    <lineage>
        <taxon>Bacteria</taxon>
        <taxon>Pseudomonadati</taxon>
        <taxon>Campylobacterota</taxon>
        <taxon>Epsilonproteobacteria</taxon>
        <taxon>Campylobacterales</taxon>
        <taxon>Helicobacteraceae</taxon>
        <taxon>Helicobacter</taxon>
    </lineage>
</organism>
<feature type="chain" id="PRO_1000012442" description="3-phosphoshikimate 1-carboxyvinyltransferase">
    <location>
        <begin position="1"/>
        <end position="429"/>
    </location>
</feature>
<feature type="active site" description="Proton acceptor" evidence="1">
    <location>
        <position position="302"/>
    </location>
</feature>
<feature type="binding site" evidence="1">
    <location>
        <position position="11"/>
    </location>
    <ligand>
        <name>3-phosphoshikimate</name>
        <dbReference type="ChEBI" id="CHEBI:145989"/>
    </ligand>
</feature>
<feature type="binding site" evidence="1">
    <location>
        <position position="11"/>
    </location>
    <ligand>
        <name>phosphoenolpyruvate</name>
        <dbReference type="ChEBI" id="CHEBI:58702"/>
    </ligand>
</feature>
<feature type="binding site" evidence="1">
    <location>
        <position position="12"/>
    </location>
    <ligand>
        <name>3-phosphoshikimate</name>
        <dbReference type="ChEBI" id="CHEBI:145989"/>
    </ligand>
</feature>
<feature type="binding site" evidence="1">
    <location>
        <position position="16"/>
    </location>
    <ligand>
        <name>3-phosphoshikimate</name>
        <dbReference type="ChEBI" id="CHEBI:145989"/>
    </ligand>
</feature>
<feature type="binding site" evidence="1">
    <location>
        <position position="82"/>
    </location>
    <ligand>
        <name>phosphoenolpyruvate</name>
        <dbReference type="ChEBI" id="CHEBI:58702"/>
    </ligand>
</feature>
<feature type="binding site" evidence="1">
    <location>
        <position position="110"/>
    </location>
    <ligand>
        <name>phosphoenolpyruvate</name>
        <dbReference type="ChEBI" id="CHEBI:58702"/>
    </ligand>
</feature>
<feature type="binding site" evidence="1">
    <location>
        <position position="155"/>
    </location>
    <ligand>
        <name>3-phosphoshikimate</name>
        <dbReference type="ChEBI" id="CHEBI:145989"/>
    </ligand>
</feature>
<feature type="binding site" evidence="1">
    <location>
        <position position="157"/>
    </location>
    <ligand>
        <name>3-phosphoshikimate</name>
        <dbReference type="ChEBI" id="CHEBI:145989"/>
    </ligand>
</feature>
<feature type="binding site" evidence="1">
    <location>
        <position position="157"/>
    </location>
    <ligand>
        <name>phosphoenolpyruvate</name>
        <dbReference type="ChEBI" id="CHEBI:58702"/>
    </ligand>
</feature>
<feature type="binding site" evidence="1">
    <location>
        <position position="302"/>
    </location>
    <ligand>
        <name>3-phosphoshikimate</name>
        <dbReference type="ChEBI" id="CHEBI:145989"/>
    </ligand>
</feature>
<feature type="binding site" evidence="1">
    <location>
        <position position="329"/>
    </location>
    <ligand>
        <name>3-phosphoshikimate</name>
        <dbReference type="ChEBI" id="CHEBI:145989"/>
    </ligand>
</feature>
<feature type="binding site" evidence="1">
    <location>
        <position position="333"/>
    </location>
    <ligand>
        <name>phosphoenolpyruvate</name>
        <dbReference type="ChEBI" id="CHEBI:58702"/>
    </ligand>
</feature>
<feature type="binding site" evidence="1">
    <location>
        <position position="385"/>
    </location>
    <ligand>
        <name>phosphoenolpyruvate</name>
        <dbReference type="ChEBI" id="CHEBI:58702"/>
    </ligand>
</feature>
<accession>Q17YI6</accession>
<gene>
    <name evidence="1" type="primary">aroA</name>
    <name type="ordered locus">Hac_0459</name>
</gene>
<comment type="function">
    <text evidence="1">Catalyzes the transfer of the enolpyruvyl moiety of phosphoenolpyruvate (PEP) to the 5-hydroxyl of shikimate-3-phosphate (S3P) to produce enolpyruvyl shikimate-3-phosphate and inorganic phosphate.</text>
</comment>
<comment type="catalytic activity">
    <reaction evidence="1">
        <text>3-phosphoshikimate + phosphoenolpyruvate = 5-O-(1-carboxyvinyl)-3-phosphoshikimate + phosphate</text>
        <dbReference type="Rhea" id="RHEA:21256"/>
        <dbReference type="ChEBI" id="CHEBI:43474"/>
        <dbReference type="ChEBI" id="CHEBI:57701"/>
        <dbReference type="ChEBI" id="CHEBI:58702"/>
        <dbReference type="ChEBI" id="CHEBI:145989"/>
        <dbReference type="EC" id="2.5.1.19"/>
    </reaction>
    <physiologicalReaction direction="left-to-right" evidence="1">
        <dbReference type="Rhea" id="RHEA:21257"/>
    </physiologicalReaction>
</comment>
<comment type="pathway">
    <text evidence="1">Metabolic intermediate biosynthesis; chorismate biosynthesis; chorismate from D-erythrose 4-phosphate and phosphoenolpyruvate: step 6/7.</text>
</comment>
<comment type="subunit">
    <text evidence="1">Monomer.</text>
</comment>
<comment type="subcellular location">
    <subcellularLocation>
        <location evidence="1">Cytoplasm</location>
    </subcellularLocation>
</comment>
<comment type="similarity">
    <text evidence="1">Belongs to the EPSP synthase family.</text>
</comment>